<accession>Q9LD43</accession>
<accession>Q56YX0</accession>
<dbReference type="EC" id="2.1.3.15"/>
<dbReference type="EMBL" id="AF056969">
    <property type="protein sequence ID" value="AAF29414.1"/>
    <property type="molecule type" value="mRNA"/>
</dbReference>
<dbReference type="EMBL" id="AF056970">
    <property type="protein sequence ID" value="AAF29415.1"/>
    <property type="molecule type" value="Genomic_DNA"/>
</dbReference>
<dbReference type="EMBL" id="CP002685">
    <property type="protein sequence ID" value="AEC09482.1"/>
    <property type="molecule type" value="Genomic_DNA"/>
</dbReference>
<dbReference type="EMBL" id="CP002685">
    <property type="protein sequence ID" value="AEC09483.1"/>
    <property type="molecule type" value="Genomic_DNA"/>
</dbReference>
<dbReference type="EMBL" id="AK221200">
    <property type="protein sequence ID" value="BAD93727.1"/>
    <property type="molecule type" value="mRNA"/>
</dbReference>
<dbReference type="RefSeq" id="NP_565880.1">
    <property type="nucleotide sequence ID" value="NM_129360.4"/>
</dbReference>
<dbReference type="RefSeq" id="NP_850291.1">
    <property type="nucleotide sequence ID" value="NM_179960.1"/>
</dbReference>
<dbReference type="SMR" id="Q9LD43"/>
<dbReference type="BioGRID" id="3726">
    <property type="interactions" value="4"/>
</dbReference>
<dbReference type="FunCoup" id="Q9LD43">
    <property type="interactions" value="1951"/>
</dbReference>
<dbReference type="STRING" id="3702.Q9LD43"/>
<dbReference type="iPTMnet" id="Q9LD43"/>
<dbReference type="MetOSite" id="Q9LD43"/>
<dbReference type="PaxDb" id="3702-AT2G38040.1"/>
<dbReference type="ProteomicsDB" id="244568"/>
<dbReference type="EnsemblPlants" id="AT2G38040.1">
    <property type="protein sequence ID" value="AT2G38040.1"/>
    <property type="gene ID" value="AT2G38040"/>
</dbReference>
<dbReference type="EnsemblPlants" id="AT2G38040.2">
    <property type="protein sequence ID" value="AT2G38040.2"/>
    <property type="gene ID" value="AT2G38040"/>
</dbReference>
<dbReference type="GeneID" id="818382"/>
<dbReference type="Gramene" id="AT2G38040.1">
    <property type="protein sequence ID" value="AT2G38040.1"/>
    <property type="gene ID" value="AT2G38040"/>
</dbReference>
<dbReference type="Gramene" id="AT2G38040.2">
    <property type="protein sequence ID" value="AT2G38040.2"/>
    <property type="gene ID" value="AT2G38040"/>
</dbReference>
<dbReference type="KEGG" id="ath:AT2G38040"/>
<dbReference type="Araport" id="AT2G38040"/>
<dbReference type="TAIR" id="AT2G38040">
    <property type="gene designation" value="CAC3"/>
</dbReference>
<dbReference type="eggNOG" id="ENOG502QPRP">
    <property type="taxonomic scope" value="Eukaryota"/>
</dbReference>
<dbReference type="HOGENOM" id="CLU_014866_2_0_1"/>
<dbReference type="InParanoid" id="Q9LD43"/>
<dbReference type="OMA" id="FNNEITT"/>
<dbReference type="OrthoDB" id="196847at2759"/>
<dbReference type="PhylomeDB" id="Q9LD43"/>
<dbReference type="BioCyc" id="ARA:AT2G38040-MONOMER"/>
<dbReference type="BioCyc" id="MetaCyc:AT2G38040-MONOMER"/>
<dbReference type="BRENDA" id="2.1.3.15">
    <property type="organism ID" value="399"/>
</dbReference>
<dbReference type="UniPathway" id="UPA00655">
    <property type="reaction ID" value="UER00711"/>
</dbReference>
<dbReference type="PRO" id="PR:Q9LD43"/>
<dbReference type="Proteomes" id="UP000006548">
    <property type="component" value="Chromosome 2"/>
</dbReference>
<dbReference type="ExpressionAtlas" id="Q9LD43">
    <property type="expression patterns" value="baseline and differential"/>
</dbReference>
<dbReference type="GO" id="GO:0009317">
    <property type="term" value="C:acetyl-CoA carboxylase complex"/>
    <property type="evidence" value="ECO:0007669"/>
    <property type="project" value="InterPro"/>
</dbReference>
<dbReference type="GO" id="GO:0009507">
    <property type="term" value="C:chloroplast"/>
    <property type="evidence" value="ECO:0007005"/>
    <property type="project" value="TAIR"/>
</dbReference>
<dbReference type="GO" id="GO:0009941">
    <property type="term" value="C:chloroplast envelope"/>
    <property type="evidence" value="ECO:0007005"/>
    <property type="project" value="TAIR"/>
</dbReference>
<dbReference type="GO" id="GO:0009706">
    <property type="term" value="C:chloroplast inner membrane"/>
    <property type="evidence" value="ECO:0007669"/>
    <property type="project" value="UniProtKB-SubCell"/>
</dbReference>
<dbReference type="GO" id="GO:0009570">
    <property type="term" value="C:chloroplast stroma"/>
    <property type="evidence" value="ECO:0007005"/>
    <property type="project" value="TAIR"/>
</dbReference>
<dbReference type="GO" id="GO:0005783">
    <property type="term" value="C:endoplasmic reticulum"/>
    <property type="evidence" value="ECO:0007005"/>
    <property type="project" value="TAIR"/>
</dbReference>
<dbReference type="GO" id="GO:0009536">
    <property type="term" value="C:plastid"/>
    <property type="evidence" value="ECO:0007005"/>
    <property type="project" value="TAIR"/>
</dbReference>
<dbReference type="GO" id="GO:0003989">
    <property type="term" value="F:acetyl-CoA carboxylase activity"/>
    <property type="evidence" value="ECO:0007669"/>
    <property type="project" value="InterPro"/>
</dbReference>
<dbReference type="GO" id="GO:0005524">
    <property type="term" value="F:ATP binding"/>
    <property type="evidence" value="ECO:0007669"/>
    <property type="project" value="UniProtKB-KW"/>
</dbReference>
<dbReference type="GO" id="GO:0016743">
    <property type="term" value="F:carboxyl- or carbamoyltransferase activity"/>
    <property type="evidence" value="ECO:0007669"/>
    <property type="project" value="InterPro"/>
</dbReference>
<dbReference type="GO" id="GO:0006633">
    <property type="term" value="P:fatty acid biosynthetic process"/>
    <property type="evidence" value="ECO:0007669"/>
    <property type="project" value="UniProtKB-KW"/>
</dbReference>
<dbReference type="GO" id="GO:2001295">
    <property type="term" value="P:malonyl-CoA biosynthetic process"/>
    <property type="evidence" value="ECO:0007669"/>
    <property type="project" value="UniProtKB-UniPathway"/>
</dbReference>
<dbReference type="FunFam" id="3.90.226.10:FF:000008">
    <property type="entry name" value="Acetyl-coenzyme A carboxylase carboxyl transferase subunit alpha"/>
    <property type="match status" value="1"/>
</dbReference>
<dbReference type="Gene3D" id="3.90.226.10">
    <property type="entry name" value="2-enoyl-CoA Hydratase, Chain A, domain 1"/>
    <property type="match status" value="1"/>
</dbReference>
<dbReference type="HAMAP" id="MF_00823">
    <property type="entry name" value="AcetylCoA_CT_alpha"/>
    <property type="match status" value="1"/>
</dbReference>
<dbReference type="InterPro" id="IPR001095">
    <property type="entry name" value="Acetyl_CoA_COase_a_su"/>
</dbReference>
<dbReference type="InterPro" id="IPR029045">
    <property type="entry name" value="ClpP/crotonase-like_dom_sf"/>
</dbReference>
<dbReference type="InterPro" id="IPR011763">
    <property type="entry name" value="COA_CT_C"/>
</dbReference>
<dbReference type="NCBIfam" id="TIGR00513">
    <property type="entry name" value="accA"/>
    <property type="match status" value="1"/>
</dbReference>
<dbReference type="NCBIfam" id="NF041504">
    <property type="entry name" value="AccA_sub"/>
    <property type="match status" value="1"/>
</dbReference>
<dbReference type="NCBIfam" id="NF004344">
    <property type="entry name" value="PRK05724.1"/>
    <property type="match status" value="1"/>
</dbReference>
<dbReference type="PANTHER" id="PTHR42853">
    <property type="entry name" value="ACETYL-COENZYME A CARBOXYLASE CARBOXYL TRANSFERASE SUBUNIT ALPHA"/>
    <property type="match status" value="1"/>
</dbReference>
<dbReference type="PANTHER" id="PTHR42853:SF3">
    <property type="entry name" value="ACETYL-COENZYME A CARBOXYLASE CARBOXYL TRANSFERASE SUBUNIT ALPHA, CHLOROPLASTIC"/>
    <property type="match status" value="1"/>
</dbReference>
<dbReference type="Pfam" id="PF03255">
    <property type="entry name" value="ACCA"/>
    <property type="match status" value="1"/>
</dbReference>
<dbReference type="PRINTS" id="PR01069">
    <property type="entry name" value="ACCCTRFRASEA"/>
</dbReference>
<dbReference type="SUPFAM" id="SSF52096">
    <property type="entry name" value="ClpP/crotonase"/>
    <property type="match status" value="1"/>
</dbReference>
<dbReference type="PROSITE" id="PS50989">
    <property type="entry name" value="COA_CT_CTER"/>
    <property type="match status" value="1"/>
</dbReference>
<feature type="transit peptide" description="Chloroplast" evidence="2">
    <location>
        <begin position="1"/>
        <end position="54"/>
    </location>
</feature>
<feature type="chain" id="PRO_0000391770" description="Acetyl-coenzyme A carboxylase carboxyl transferase subunit alpha, chloroplastic">
    <location>
        <begin position="55"/>
        <end position="769"/>
    </location>
</feature>
<feature type="domain" description="CoA carboxyltransferase C-terminal" evidence="3">
    <location>
        <begin position="132"/>
        <end position="385"/>
    </location>
</feature>
<feature type="region of interest" description="Disordered" evidence="4">
    <location>
        <begin position="718"/>
        <end position="769"/>
    </location>
</feature>
<feature type="coiled-coil region" evidence="2">
    <location>
        <begin position="426"/>
        <end position="504"/>
    </location>
</feature>
<feature type="coiled-coil region" evidence="2">
    <location>
        <begin position="631"/>
        <end position="744"/>
    </location>
</feature>
<feature type="compositionally biased region" description="Basic and acidic residues" evidence="4">
    <location>
        <begin position="721"/>
        <end position="732"/>
    </location>
</feature>
<feature type="compositionally biased region" description="Acidic residues" evidence="4">
    <location>
        <begin position="738"/>
        <end position="756"/>
    </location>
</feature>
<feature type="modified residue" description="Phosphoserine" evidence="8 9">
    <location>
        <position position="741"/>
    </location>
</feature>
<feature type="disulfide bond" description="Interchain (with C-442 in beta subunit)" evidence="7">
    <location>
        <position position="322"/>
    </location>
</feature>
<feature type="sequence conflict" description="In Ref. 4; BAD93727." evidence="7" ref="4">
    <original>M</original>
    <variation>I</variation>
    <location>
        <position position="203"/>
    </location>
</feature>
<name>ACCA_ARATH</name>
<reference key="1">
    <citation type="journal article" date="2000" name="Plant Physiol.">
        <title>Coordinate regulation of the nuclear and plastidic genes coding for the subunits of the heteromeric acetyl-coenzyme A carboxylase.</title>
        <authorList>
            <person name="Ke J."/>
            <person name="Wen T.N."/>
            <person name="Nikolau B.J."/>
            <person name="Wurtele E.S."/>
        </authorList>
    </citation>
    <scope>NUCLEOTIDE SEQUENCE [GENOMIC DNA / MRNA]</scope>
    <scope>SUBUNIT</scope>
    <scope>TISSUE SPECIFICITY</scope>
    <scope>SUBCELLULAR LOCATION</scope>
    <source>
        <strain>cv. Columbia</strain>
        <strain>cv. Landsberg erecta</strain>
    </source>
</reference>
<reference key="2">
    <citation type="journal article" date="1999" name="Nature">
        <title>Sequence and analysis of chromosome 2 of the plant Arabidopsis thaliana.</title>
        <authorList>
            <person name="Lin X."/>
            <person name="Kaul S."/>
            <person name="Rounsley S.D."/>
            <person name="Shea T.P."/>
            <person name="Benito M.-I."/>
            <person name="Town C.D."/>
            <person name="Fujii C.Y."/>
            <person name="Mason T.M."/>
            <person name="Bowman C.L."/>
            <person name="Barnstead M.E."/>
            <person name="Feldblyum T.V."/>
            <person name="Buell C.R."/>
            <person name="Ketchum K.A."/>
            <person name="Lee J.J."/>
            <person name="Ronning C.M."/>
            <person name="Koo H.L."/>
            <person name="Moffat K.S."/>
            <person name="Cronin L.A."/>
            <person name="Shen M."/>
            <person name="Pai G."/>
            <person name="Van Aken S."/>
            <person name="Umayam L."/>
            <person name="Tallon L.J."/>
            <person name="Gill J.E."/>
            <person name="Adams M.D."/>
            <person name="Carrera A.J."/>
            <person name="Creasy T.H."/>
            <person name="Goodman H.M."/>
            <person name="Somerville C.R."/>
            <person name="Copenhaver G.P."/>
            <person name="Preuss D."/>
            <person name="Nierman W.C."/>
            <person name="White O."/>
            <person name="Eisen J.A."/>
            <person name="Salzberg S.L."/>
            <person name="Fraser C.M."/>
            <person name="Venter J.C."/>
        </authorList>
    </citation>
    <scope>NUCLEOTIDE SEQUENCE [LARGE SCALE GENOMIC DNA]</scope>
    <source>
        <strain>cv. Columbia</strain>
    </source>
</reference>
<reference key="3">
    <citation type="journal article" date="2017" name="Plant J.">
        <title>Araport11: a complete reannotation of the Arabidopsis thaliana reference genome.</title>
        <authorList>
            <person name="Cheng C.Y."/>
            <person name="Krishnakumar V."/>
            <person name="Chan A.P."/>
            <person name="Thibaud-Nissen F."/>
            <person name="Schobel S."/>
            <person name="Town C.D."/>
        </authorList>
    </citation>
    <scope>GENOME REANNOTATION</scope>
    <source>
        <strain>cv. Columbia</strain>
    </source>
</reference>
<reference key="4">
    <citation type="submission" date="2005-03" db="EMBL/GenBank/DDBJ databases">
        <title>Large-scale analysis of RIKEN Arabidopsis full-length (RAFL) cDNAs.</title>
        <authorList>
            <person name="Totoki Y."/>
            <person name="Seki M."/>
            <person name="Ishida J."/>
            <person name="Nakajima M."/>
            <person name="Enju A."/>
            <person name="Kamiya A."/>
            <person name="Narusaka M."/>
            <person name="Shin-i T."/>
            <person name="Nakagawa M."/>
            <person name="Sakamoto N."/>
            <person name="Oishi K."/>
            <person name="Kohara Y."/>
            <person name="Kobayashi M."/>
            <person name="Toyoda A."/>
            <person name="Sakaki Y."/>
            <person name="Sakurai T."/>
            <person name="Iida K."/>
            <person name="Akiyama K."/>
            <person name="Satou M."/>
            <person name="Toyoda T."/>
            <person name="Konagaya A."/>
            <person name="Carninci P."/>
            <person name="Kawai J."/>
            <person name="Hayashizaki Y."/>
            <person name="Shinozaki K."/>
        </authorList>
    </citation>
    <scope>NUCLEOTIDE SEQUENCE [LARGE SCALE MRNA]</scope>
    <source>
        <strain>cv. Columbia</strain>
    </source>
</reference>
<reference key="5">
    <citation type="journal article" date="2007" name="Mol. Cell. Proteomics">
        <title>Multidimensional protein identification technology (MudPIT) analysis of ubiquitinated proteins in plants.</title>
        <authorList>
            <person name="Maor R."/>
            <person name="Jones A."/>
            <person name="Nuehse T.S."/>
            <person name="Studholme D.J."/>
            <person name="Peck S.C."/>
            <person name="Shirasu K."/>
        </authorList>
    </citation>
    <scope>IDENTIFICATION BY MASS SPECTROMETRY [LARGE SCALE ANALYSIS]</scope>
    <source>
        <strain>cv. Landsberg erecta</strain>
    </source>
</reference>
<reference key="6">
    <citation type="journal article" date="2008" name="PLoS ONE">
        <title>Sorting signals, N-terminal modifications and abundance of the chloroplast proteome.</title>
        <authorList>
            <person name="Zybailov B."/>
            <person name="Rutschow H."/>
            <person name="Friso G."/>
            <person name="Rudella A."/>
            <person name="Emanuelsson O."/>
            <person name="Sun Q."/>
            <person name="van Wijk K.J."/>
        </authorList>
    </citation>
    <scope>IDENTIFICATION BY MASS SPECTROMETRY</scope>
    <scope>SUBCELLULAR LOCATION [LARGE SCALE ANALYSIS]</scope>
</reference>
<reference key="7">
    <citation type="journal article" date="2009" name="J. Proteomics">
        <title>Phosphoproteomic analysis of nuclei-enriched fractions from Arabidopsis thaliana.</title>
        <authorList>
            <person name="Jones A.M.E."/>
            <person name="MacLean D."/>
            <person name="Studholme D.J."/>
            <person name="Serna-Sanz A."/>
            <person name="Andreasson E."/>
            <person name="Rathjen J.P."/>
            <person name="Peck S.C."/>
        </authorList>
    </citation>
    <scope>PHOSPHORYLATION [LARGE SCALE ANALYSIS] AT SER-741</scope>
    <scope>IDENTIFICATION BY MASS SPECTROMETRY [LARGE SCALE ANALYSIS]</scope>
    <source>
        <strain>cv. Columbia</strain>
    </source>
</reference>
<reference key="8">
    <citation type="journal article" date="2009" name="Plant Physiol.">
        <title>Large-scale Arabidopsis phosphoproteome profiling reveals novel chloroplast kinase substrates and phosphorylation networks.</title>
        <authorList>
            <person name="Reiland S."/>
            <person name="Messerli G."/>
            <person name="Baerenfaller K."/>
            <person name="Gerrits B."/>
            <person name="Endler A."/>
            <person name="Grossmann J."/>
            <person name="Gruissem W."/>
            <person name="Baginsky S."/>
        </authorList>
    </citation>
    <scope>PHOSPHORYLATION [LARGE SCALE ANALYSIS] AT SER-741</scope>
    <scope>IDENTIFICATION BY MASS SPECTROMETRY [LARGE SCALE ANALYSIS]</scope>
</reference>
<comment type="function">
    <text evidence="1">Component of the acetyl coenzyme A carboxylase (ACC) complex. First, biotin carboxylase catalyzes the carboxylation of biotin on its carrier protein (BCCP) and then the CO(2) group is transferred by the carboxyltransferase to acetyl-CoA to form malonyl-CoA (By similarity).</text>
</comment>
<comment type="catalytic activity">
    <reaction>
        <text>N(6)-carboxybiotinyl-L-lysyl-[protein] + acetyl-CoA = N(6)-biotinyl-L-lysyl-[protein] + malonyl-CoA</text>
        <dbReference type="Rhea" id="RHEA:54728"/>
        <dbReference type="Rhea" id="RHEA-COMP:10505"/>
        <dbReference type="Rhea" id="RHEA-COMP:10506"/>
        <dbReference type="ChEBI" id="CHEBI:57288"/>
        <dbReference type="ChEBI" id="CHEBI:57384"/>
        <dbReference type="ChEBI" id="CHEBI:83144"/>
        <dbReference type="ChEBI" id="CHEBI:83145"/>
        <dbReference type="EC" id="2.1.3.15"/>
    </reaction>
</comment>
<comment type="pathway">
    <text>Lipid metabolism; malonyl-CoA biosynthesis; malonyl-CoA from acetyl-CoA: step 1/1.</text>
</comment>
<comment type="subunit">
    <text evidence="5">Acetyl-CoA carboxylase is a heterohexamer composed of biotin carboxyl carrier protein, biotin carboxylase and two subunits each of ACCase subunit alpha and ACCase plastid-coded subunit beta (accD).</text>
</comment>
<comment type="subcellular location">
    <subcellularLocation>
        <location evidence="5 6">Plastid</location>
        <location evidence="5 6">Chloroplast inner membrane</location>
        <topology evidence="5 6">Peripheral membrane protein</topology>
        <orientation evidence="5 6">Stromal side</orientation>
    </subcellularLocation>
</comment>
<comment type="tissue specificity">
    <text evidence="5">Accumulates in fatty acids synthesizing tissues such as embryos, expanding leaves, flower buds, flowers, and developing siliques.</text>
</comment>
<comment type="similarity">
    <text evidence="7">Belongs to the AccA family.</text>
</comment>
<sequence>MASISHSSLALGGASSASASDYLRSSSNGVNGVPLKTLGRAVFTTIRRKDLAVTSRLKKGKKFEHPWPANPDPNVKGGVLSYLAEFKPLGDTQKPVTLDFEKPLVELEKKIVDVRKMANETGLDFTEQIITLENKYRQALKDLYTHLTPIQRVNIARHPNRPTFLDHIHNITDKFMELHGDRAGYDDPAIVTGIGTIDGKRYMFIGHQKGRNTKENIMRNFGMPTPHGYRKALRMMYYADHHGFPIVTFIDTPGAYADLKSEELGQGEAIANNLRTMFGLKVPILSIVIGEGGSGGALAIGCANKMLMLENAVFYVASPEACAAILWKTSKAAPEAAEKLRITSKELVKLNVADGIIPEPLGGAHADPSWTSQQIKIAINENMNEFGKMSGEELLKHRMAKYRKIGVFIEGEPIEPSRKINMKKREAVFSDSRKLQGEVDKLKEQILKAKETSTEAEPSSEVLNEMIEKLKSEIDDEYTEAAIAVGLEERLTAMREEFSKASSEEHLMHPVLIEKIEKLKEEFNTRLTDAPNYESLKSKLNMLRDFSRAKAASEATSLKKEINKRFQEAVDRPEIREKVEAIKAEVASSGASSFDELPDALKEKVLKTKGEVEAEMAGVLKSMGLELDAVKQNQKDTAEQIYAANENLQEKLEKLNQEITSKIEEVVRTPEIKSMVELLKVETAKASKTPGVTEAYQKIEALEQQIKQKIAEALNTSGLQEKQDELEKELAAARELAAEESDGSVKEDDDDDEDSSESGKSEMVNPSFA</sequence>
<keyword id="KW-0067">ATP-binding</keyword>
<keyword id="KW-0150">Chloroplast</keyword>
<keyword id="KW-0175">Coiled coil</keyword>
<keyword id="KW-1015">Disulfide bond</keyword>
<keyword id="KW-0275">Fatty acid biosynthesis</keyword>
<keyword id="KW-0276">Fatty acid metabolism</keyword>
<keyword id="KW-0444">Lipid biosynthesis</keyword>
<keyword id="KW-0443">Lipid metabolism</keyword>
<keyword id="KW-0472">Membrane</keyword>
<keyword id="KW-0547">Nucleotide-binding</keyword>
<keyword id="KW-0597">Phosphoprotein</keyword>
<keyword id="KW-0934">Plastid</keyword>
<keyword id="KW-1001">Plastid inner membrane</keyword>
<keyword id="KW-1185">Reference proteome</keyword>
<keyword id="KW-0808">Transferase</keyword>
<keyword id="KW-0809">Transit peptide</keyword>
<evidence type="ECO:0000250" key="1"/>
<evidence type="ECO:0000255" key="2"/>
<evidence type="ECO:0000255" key="3">
    <source>
        <dbReference type="PROSITE-ProRule" id="PRU01137"/>
    </source>
</evidence>
<evidence type="ECO:0000256" key="4">
    <source>
        <dbReference type="SAM" id="MobiDB-lite"/>
    </source>
</evidence>
<evidence type="ECO:0000269" key="5">
    <source>
    </source>
</evidence>
<evidence type="ECO:0000269" key="6">
    <source>
    </source>
</evidence>
<evidence type="ECO:0000305" key="7"/>
<evidence type="ECO:0007744" key="8">
    <source>
    </source>
</evidence>
<evidence type="ECO:0007744" key="9">
    <source>
    </source>
</evidence>
<protein>
    <recommendedName>
        <fullName>Acetyl-coenzyme A carboxylase carboxyl transferase subunit alpha, chloroplastic</fullName>
        <shortName>ACCase subunit alpha</shortName>
        <shortName>Acetyl-CoA carboxylase carboxyltransferase subunit alpha</shortName>
        <ecNumber>2.1.3.15</ecNumber>
    </recommendedName>
</protein>
<gene>
    <name type="primary">CAC3</name>
    <name type="ordered locus">At2g38040</name>
    <name type="ORF">T8P21.5</name>
</gene>
<proteinExistence type="evidence at protein level"/>
<organism>
    <name type="scientific">Arabidopsis thaliana</name>
    <name type="common">Mouse-ear cress</name>
    <dbReference type="NCBI Taxonomy" id="3702"/>
    <lineage>
        <taxon>Eukaryota</taxon>
        <taxon>Viridiplantae</taxon>
        <taxon>Streptophyta</taxon>
        <taxon>Embryophyta</taxon>
        <taxon>Tracheophyta</taxon>
        <taxon>Spermatophyta</taxon>
        <taxon>Magnoliopsida</taxon>
        <taxon>eudicotyledons</taxon>
        <taxon>Gunneridae</taxon>
        <taxon>Pentapetalae</taxon>
        <taxon>rosids</taxon>
        <taxon>malvids</taxon>
        <taxon>Brassicales</taxon>
        <taxon>Brassicaceae</taxon>
        <taxon>Camelineae</taxon>
        <taxon>Arabidopsis</taxon>
    </lineage>
</organism>